<sequence length="464" mass="49725">MNLRTIRAELQQFLQLAIPLAAAQVAQAAVGFVDTVMMGRLGPEPLAAGGLASALFQFILATASGVVMAVSPLVAEAQGAGKDYKIAAIARQGLWLSVLLGLPVMLIISQLARLMPVLGQSATTIALARDYWMAVLWGIIPGLGFAMLRGYVAALEQARIILPLVLFGTLVNGLGNYLLGYGQLGFPRLELTGLGLSSALGLWVMFLGLLAYTAWQPKLRRYPFWQDWRRLQPSICRQILQLGWAIAVTVAVEFGLFTIITILMGAIGVEALAAHQTVSQTIILIFMVPLGCSFAVTVRVGWWLGRQDGLGARRAGLVGVGAIALWMLLLAIPLALFPRAIVGIYVDLNNPVNAGLLNLALPMLRVASLALVLDGVQRVAMGALHGLQDTRIPLLLSLLAFWMVGVGSSAMLGFQLGWGSTGLWIGQSLGVAIAGGLFLQRFLKLTQNRTFKQRLQPQPLATHP</sequence>
<protein>
    <recommendedName>
        <fullName>Probable multidrug resistance protein NorM</fullName>
    </recommendedName>
    <alternativeName>
        <fullName>Multidrug-efflux transporter</fullName>
    </alternativeName>
</protein>
<evidence type="ECO:0000250" key="1"/>
<evidence type="ECO:0000255" key="2"/>
<evidence type="ECO:0000305" key="3"/>
<accession>Q5MZD9</accession>
<proteinExistence type="inferred from homology"/>
<name>NORM_SYNP6</name>
<feature type="chain" id="PRO_0000164241" description="Probable multidrug resistance protein NorM">
    <location>
        <begin position="1"/>
        <end position="464"/>
    </location>
</feature>
<feature type="transmembrane region" description="Helical" evidence="2">
    <location>
        <begin position="13"/>
        <end position="32"/>
    </location>
</feature>
<feature type="transmembrane region" description="Helical" evidence="2">
    <location>
        <begin position="52"/>
        <end position="74"/>
    </location>
</feature>
<feature type="transmembrane region" description="Helical" evidence="2">
    <location>
        <begin position="94"/>
        <end position="116"/>
    </location>
</feature>
<feature type="transmembrane region" description="Helical" evidence="2">
    <location>
        <begin position="131"/>
        <end position="153"/>
    </location>
</feature>
<feature type="transmembrane region" description="Helical" evidence="2">
    <location>
        <begin position="160"/>
        <end position="182"/>
    </location>
</feature>
<feature type="transmembrane region" description="Helical" evidence="2">
    <location>
        <begin position="192"/>
        <end position="214"/>
    </location>
</feature>
<feature type="transmembrane region" description="Helical" evidence="2">
    <location>
        <begin position="244"/>
        <end position="266"/>
    </location>
</feature>
<feature type="transmembrane region" description="Helical" evidence="2">
    <location>
        <begin position="281"/>
        <end position="303"/>
    </location>
</feature>
<feature type="transmembrane region" description="Helical" evidence="2">
    <location>
        <begin position="315"/>
        <end position="337"/>
    </location>
</feature>
<feature type="transmembrane region" description="Helical" evidence="2">
    <location>
        <begin position="352"/>
        <end position="373"/>
    </location>
</feature>
<feature type="transmembrane region" description="Helical" evidence="2">
    <location>
        <begin position="394"/>
        <end position="416"/>
    </location>
</feature>
<feature type="transmembrane region" description="Helical" evidence="2">
    <location>
        <begin position="421"/>
        <end position="443"/>
    </location>
</feature>
<comment type="function">
    <text evidence="1">Multidrug efflux pump.</text>
</comment>
<comment type="subcellular location">
    <subcellularLocation>
        <location evidence="1">Cell inner membrane</location>
        <topology evidence="1">Multi-pass membrane protein</topology>
    </subcellularLocation>
</comment>
<comment type="similarity">
    <text evidence="3">Belongs to the multi antimicrobial extrusion (MATE) (TC 2.A.66.1) family.</text>
</comment>
<reference key="1">
    <citation type="journal article" date="2007" name="Photosyn. Res.">
        <title>Complete nucleotide sequence of the freshwater unicellular cyanobacterium Synechococcus elongatus PCC 6301 chromosome: gene content and organization.</title>
        <authorList>
            <person name="Sugita C."/>
            <person name="Ogata K."/>
            <person name="Shikata M."/>
            <person name="Jikuya H."/>
            <person name="Takano J."/>
            <person name="Furumichi M."/>
            <person name="Kanehisa M."/>
            <person name="Omata T."/>
            <person name="Sugiura M."/>
            <person name="Sugita M."/>
        </authorList>
    </citation>
    <scope>NUCLEOTIDE SEQUENCE [LARGE SCALE GENOMIC DNA]</scope>
    <source>
        <strain>ATCC 27144 / PCC 6301 / SAUG 1402/1</strain>
    </source>
</reference>
<gene>
    <name type="primary">norM</name>
    <name type="ordered locus">syc2391_d</name>
</gene>
<keyword id="KW-0050">Antiport</keyword>
<keyword id="KW-0997">Cell inner membrane</keyword>
<keyword id="KW-1003">Cell membrane</keyword>
<keyword id="KW-0406">Ion transport</keyword>
<keyword id="KW-0472">Membrane</keyword>
<keyword id="KW-0812">Transmembrane</keyword>
<keyword id="KW-1133">Transmembrane helix</keyword>
<keyword id="KW-0813">Transport</keyword>
<dbReference type="EMBL" id="AP008231">
    <property type="protein sequence ID" value="BAD80581.1"/>
    <property type="molecule type" value="Genomic_DNA"/>
</dbReference>
<dbReference type="RefSeq" id="WP_011244701.1">
    <property type="nucleotide sequence ID" value="NZ_CP085785.1"/>
</dbReference>
<dbReference type="SMR" id="Q5MZD9"/>
<dbReference type="KEGG" id="syc:syc2391_d"/>
<dbReference type="eggNOG" id="COG0534">
    <property type="taxonomic scope" value="Bacteria"/>
</dbReference>
<dbReference type="Proteomes" id="UP000001175">
    <property type="component" value="Chromosome"/>
</dbReference>
<dbReference type="GO" id="GO:0005886">
    <property type="term" value="C:plasma membrane"/>
    <property type="evidence" value="ECO:0007669"/>
    <property type="project" value="UniProtKB-SubCell"/>
</dbReference>
<dbReference type="GO" id="GO:0015297">
    <property type="term" value="F:antiporter activity"/>
    <property type="evidence" value="ECO:0007669"/>
    <property type="project" value="UniProtKB-KW"/>
</dbReference>
<dbReference type="GO" id="GO:0042910">
    <property type="term" value="F:xenobiotic transmembrane transporter activity"/>
    <property type="evidence" value="ECO:0007669"/>
    <property type="project" value="InterPro"/>
</dbReference>
<dbReference type="GO" id="GO:0006811">
    <property type="term" value="P:monoatomic ion transport"/>
    <property type="evidence" value="ECO:0007669"/>
    <property type="project" value="UniProtKB-KW"/>
</dbReference>
<dbReference type="CDD" id="cd13131">
    <property type="entry name" value="MATE_NorM_like"/>
    <property type="match status" value="1"/>
</dbReference>
<dbReference type="InterPro" id="IPR002528">
    <property type="entry name" value="MATE_fam"/>
</dbReference>
<dbReference type="InterPro" id="IPR050222">
    <property type="entry name" value="MATE_MdtK"/>
</dbReference>
<dbReference type="NCBIfam" id="TIGR00797">
    <property type="entry name" value="matE"/>
    <property type="match status" value="1"/>
</dbReference>
<dbReference type="PANTHER" id="PTHR43298:SF2">
    <property type="entry name" value="FMN_FAD EXPORTER YEEO-RELATED"/>
    <property type="match status" value="1"/>
</dbReference>
<dbReference type="PANTHER" id="PTHR43298">
    <property type="entry name" value="MULTIDRUG RESISTANCE PROTEIN NORM-RELATED"/>
    <property type="match status" value="1"/>
</dbReference>
<dbReference type="Pfam" id="PF01554">
    <property type="entry name" value="MatE"/>
    <property type="match status" value="2"/>
</dbReference>
<organism>
    <name type="scientific">Synechococcus sp. (strain ATCC 27144 / PCC 6301 / SAUG 1402/1)</name>
    <name type="common">Anacystis nidulans</name>
    <dbReference type="NCBI Taxonomy" id="269084"/>
    <lineage>
        <taxon>Bacteria</taxon>
        <taxon>Bacillati</taxon>
        <taxon>Cyanobacteriota</taxon>
        <taxon>Cyanophyceae</taxon>
        <taxon>Synechococcales</taxon>
        <taxon>Synechococcaceae</taxon>
        <taxon>Synechococcus</taxon>
    </lineage>
</organism>